<reference key="1">
    <citation type="journal article" date="2002" name="Proc. Natl. Acad. Sci. U.S.A.">
        <title>Extensive mosaic structure revealed by the complete genome sequence of uropathogenic Escherichia coli.</title>
        <authorList>
            <person name="Welch R.A."/>
            <person name="Burland V."/>
            <person name="Plunkett G. III"/>
            <person name="Redford P."/>
            <person name="Roesch P."/>
            <person name="Rasko D."/>
            <person name="Buckles E.L."/>
            <person name="Liou S.-R."/>
            <person name="Boutin A."/>
            <person name="Hackett J."/>
            <person name="Stroud D."/>
            <person name="Mayhew G.F."/>
            <person name="Rose D.J."/>
            <person name="Zhou S."/>
            <person name="Schwartz D.C."/>
            <person name="Perna N.T."/>
            <person name="Mobley H.L.T."/>
            <person name="Donnenberg M.S."/>
            <person name="Blattner F.R."/>
        </authorList>
    </citation>
    <scope>NUCLEOTIDE SEQUENCE [LARGE SCALE GENOMIC DNA]</scope>
    <source>
        <strain>CFT073 / ATCC 700928 / UPEC</strain>
    </source>
</reference>
<evidence type="ECO:0000255" key="1">
    <source>
        <dbReference type="HAMAP-Rule" id="MF_01425"/>
    </source>
</evidence>
<evidence type="ECO:0000305" key="2"/>
<comment type="function">
    <text evidence="1">Divalent metal cation transporter which exports Zn(2+), Cd(2+) and possibly Fe(2+). May be involved in zinc and iron detoxification by efflux.</text>
</comment>
<comment type="catalytic activity">
    <reaction evidence="1">
        <text>Zn(2+)(in) + H(+)(out) = Zn(2+)(out) + H(+)(in)</text>
        <dbReference type="Rhea" id="RHEA:28839"/>
        <dbReference type="ChEBI" id="CHEBI:15378"/>
        <dbReference type="ChEBI" id="CHEBI:29105"/>
    </reaction>
</comment>
<comment type="catalytic activity">
    <reaction evidence="1">
        <text>Cd(2+)(in) + H(+)(out) = Cd(2+)(out) + H(+)(in)</text>
        <dbReference type="Rhea" id="RHEA:28739"/>
        <dbReference type="ChEBI" id="CHEBI:15378"/>
        <dbReference type="ChEBI" id="CHEBI:48775"/>
    </reaction>
</comment>
<comment type="catalytic activity">
    <reaction evidence="1">
        <text>Fe(2+)(in) + H(+)(out) = Fe(2+)(out) + H(+)(in)</text>
        <dbReference type="Rhea" id="RHEA:29439"/>
        <dbReference type="ChEBI" id="CHEBI:15378"/>
        <dbReference type="ChEBI" id="CHEBI:29033"/>
    </reaction>
</comment>
<comment type="subunit">
    <text evidence="1">Homodimer.</text>
</comment>
<comment type="subcellular location">
    <subcellularLocation>
        <location evidence="1">Cell inner membrane</location>
        <topology evidence="1">Multi-pass membrane protein</topology>
    </subcellularLocation>
</comment>
<comment type="similarity">
    <text evidence="1 2">Belongs to the cation diffusion facilitator (CDF) transporter (TC 2.A.4) family. FieF subfamily.</text>
</comment>
<comment type="sequence caution" evidence="2">
    <conflict type="erroneous initiation">
        <sequence resource="EMBL-CDS" id="AAN83294"/>
    </conflict>
</comment>
<proteinExistence type="inferred from homology"/>
<protein>
    <recommendedName>
        <fullName evidence="1">Cation-efflux pump FieF</fullName>
    </recommendedName>
</protein>
<sequence length="300" mass="32913">MNQSYGRLVSRAAIAATAMASLLLLIKIFAWWYTGSVSILAALVDSLVDIGASLTNLLVVRYSLQPADDNHSFGHGKAESLAALAQSMFISGSALFLFLTGIQHLVSPTPMTDPGVGVIVTIVALICTIILVSFQRWVVRRTQSQAVRADMLHYQSDVMMNGAILLALGLSWYGWHRADALFALGIGIYILYSALRMGYEAVQSLLDRALPDEERQEIIDIVTSWPGVSGAHDLRTRQSGPTRFIQIHLEMEDSLPLVQAHMVADQVEQAILRRFPGSDVIIHQDPCSVVPREGKRSMLS</sequence>
<dbReference type="EMBL" id="AE014075">
    <property type="protein sequence ID" value="AAN83294.1"/>
    <property type="status" value="ALT_INIT"/>
    <property type="molecule type" value="Genomic_DNA"/>
</dbReference>
<dbReference type="RefSeq" id="WP_001076748.1">
    <property type="nucleotide sequence ID" value="NZ_CP051263.1"/>
</dbReference>
<dbReference type="SMR" id="Q8FBD1"/>
<dbReference type="STRING" id="199310.c4866"/>
<dbReference type="GeneID" id="93777983"/>
<dbReference type="KEGG" id="ecc:c4866"/>
<dbReference type="eggNOG" id="COG0053">
    <property type="taxonomic scope" value="Bacteria"/>
</dbReference>
<dbReference type="HOGENOM" id="CLU_013430_3_0_6"/>
<dbReference type="Proteomes" id="UP000001410">
    <property type="component" value="Chromosome"/>
</dbReference>
<dbReference type="GO" id="GO:0005886">
    <property type="term" value="C:plasma membrane"/>
    <property type="evidence" value="ECO:0007669"/>
    <property type="project" value="UniProtKB-SubCell"/>
</dbReference>
<dbReference type="GO" id="GO:0015086">
    <property type="term" value="F:cadmium ion transmembrane transporter activity"/>
    <property type="evidence" value="ECO:0007669"/>
    <property type="project" value="UniProtKB-UniRule"/>
</dbReference>
<dbReference type="GO" id="GO:0015093">
    <property type="term" value="F:ferrous iron transmembrane transporter activity"/>
    <property type="evidence" value="ECO:0007669"/>
    <property type="project" value="TreeGrafter"/>
</dbReference>
<dbReference type="GO" id="GO:0046872">
    <property type="term" value="F:metal ion binding"/>
    <property type="evidence" value="ECO:0007669"/>
    <property type="project" value="UniProtKB-KW"/>
</dbReference>
<dbReference type="GO" id="GO:0015341">
    <property type="term" value="F:zinc efflux antiporter activity"/>
    <property type="evidence" value="ECO:0007669"/>
    <property type="project" value="TreeGrafter"/>
</dbReference>
<dbReference type="GO" id="GO:0006882">
    <property type="term" value="P:intracellular zinc ion homeostasis"/>
    <property type="evidence" value="ECO:0007669"/>
    <property type="project" value="TreeGrafter"/>
</dbReference>
<dbReference type="FunFam" id="1.20.1510.10:FF:000001">
    <property type="entry name" value="Ferrous-iron efflux pump FieF"/>
    <property type="match status" value="1"/>
</dbReference>
<dbReference type="FunFam" id="3.30.70.1350:FF:000002">
    <property type="entry name" value="Ferrous-iron efflux pump FieF"/>
    <property type="match status" value="1"/>
</dbReference>
<dbReference type="Gene3D" id="1.20.1510.10">
    <property type="entry name" value="Cation efflux protein transmembrane domain"/>
    <property type="match status" value="1"/>
</dbReference>
<dbReference type="Gene3D" id="3.30.70.1350">
    <property type="entry name" value="Cation efflux protein, cytoplasmic domain"/>
    <property type="match status" value="1"/>
</dbReference>
<dbReference type="HAMAP" id="MF_01425">
    <property type="entry name" value="Cation_efflux_FieF"/>
    <property type="match status" value="1"/>
</dbReference>
<dbReference type="InterPro" id="IPR002524">
    <property type="entry name" value="Cation_efflux"/>
</dbReference>
<dbReference type="InterPro" id="IPR027470">
    <property type="entry name" value="Cation_efflux_CTD"/>
</dbReference>
<dbReference type="InterPro" id="IPR036837">
    <property type="entry name" value="Cation_efflux_CTD_sf"/>
</dbReference>
<dbReference type="InterPro" id="IPR023783">
    <property type="entry name" value="Cation_efflux_FieF"/>
</dbReference>
<dbReference type="InterPro" id="IPR027469">
    <property type="entry name" value="Cation_efflux_TMD_sf"/>
</dbReference>
<dbReference type="InterPro" id="IPR050291">
    <property type="entry name" value="CDF_Transporter"/>
</dbReference>
<dbReference type="NCBIfam" id="TIGR01297">
    <property type="entry name" value="CDF"/>
    <property type="match status" value="1"/>
</dbReference>
<dbReference type="NCBIfam" id="NF007064">
    <property type="entry name" value="PRK09509.1"/>
    <property type="match status" value="1"/>
</dbReference>
<dbReference type="PANTHER" id="PTHR43840:SF41">
    <property type="entry name" value="CATION-EFFLUX PUMP FIEF"/>
    <property type="match status" value="1"/>
</dbReference>
<dbReference type="PANTHER" id="PTHR43840">
    <property type="entry name" value="MITOCHONDRIAL METAL TRANSPORTER 1-RELATED"/>
    <property type="match status" value="1"/>
</dbReference>
<dbReference type="Pfam" id="PF01545">
    <property type="entry name" value="Cation_efflux"/>
    <property type="match status" value="1"/>
</dbReference>
<dbReference type="Pfam" id="PF16916">
    <property type="entry name" value="ZT_dimer"/>
    <property type="match status" value="1"/>
</dbReference>
<dbReference type="SUPFAM" id="SSF160240">
    <property type="entry name" value="Cation efflux protein cytoplasmic domain-like"/>
    <property type="match status" value="1"/>
</dbReference>
<dbReference type="SUPFAM" id="SSF161111">
    <property type="entry name" value="Cation efflux protein transmembrane domain-like"/>
    <property type="match status" value="1"/>
</dbReference>
<name>FIEF_ECOL6</name>
<accession>Q8FBD1</accession>
<organism>
    <name type="scientific">Escherichia coli O6:H1 (strain CFT073 / ATCC 700928 / UPEC)</name>
    <dbReference type="NCBI Taxonomy" id="199310"/>
    <lineage>
        <taxon>Bacteria</taxon>
        <taxon>Pseudomonadati</taxon>
        <taxon>Pseudomonadota</taxon>
        <taxon>Gammaproteobacteria</taxon>
        <taxon>Enterobacterales</taxon>
        <taxon>Enterobacteriaceae</taxon>
        <taxon>Escherichia</taxon>
    </lineage>
</organism>
<feature type="chain" id="PRO_0000206125" description="Cation-efflux pump FieF">
    <location>
        <begin position="1"/>
        <end position="300"/>
    </location>
</feature>
<feature type="transmembrane region" description="Helical" evidence="1">
    <location>
        <begin position="12"/>
        <end position="32"/>
    </location>
</feature>
<feature type="transmembrane region" description="Helical" evidence="1">
    <location>
        <begin position="39"/>
        <end position="59"/>
    </location>
</feature>
<feature type="transmembrane region" description="Helical" evidence="1">
    <location>
        <begin position="82"/>
        <end position="102"/>
    </location>
</feature>
<feature type="transmembrane region" description="Helical" evidence="1">
    <location>
        <begin position="114"/>
        <end position="134"/>
    </location>
</feature>
<feature type="transmembrane region" description="Helical" evidence="1">
    <location>
        <begin position="156"/>
        <end position="176"/>
    </location>
</feature>
<feature type="transmembrane region" description="Helical" evidence="1">
    <location>
        <begin position="178"/>
        <end position="198"/>
    </location>
</feature>
<feature type="binding site" evidence="1">
    <location>
        <position position="45"/>
    </location>
    <ligand>
        <name>Zn(2+)</name>
        <dbReference type="ChEBI" id="CHEBI:29105"/>
    </ligand>
</feature>
<feature type="binding site" evidence="1">
    <location>
        <position position="49"/>
    </location>
    <ligand>
        <name>Zn(2+)</name>
        <dbReference type="ChEBI" id="CHEBI:29105"/>
    </ligand>
</feature>
<feature type="binding site" evidence="1">
    <location>
        <position position="153"/>
    </location>
    <ligand>
        <name>Zn(2+)</name>
        <dbReference type="ChEBI" id="CHEBI:29105"/>
    </ligand>
</feature>
<feature type="binding site" evidence="1">
    <location>
        <position position="157"/>
    </location>
    <ligand>
        <name>Zn(2+)</name>
        <dbReference type="ChEBI" id="CHEBI:29105"/>
    </ligand>
</feature>
<gene>
    <name evidence="1" type="primary">fieF</name>
    <name type="ordered locus">c4866</name>
</gene>
<keyword id="KW-0997">Cell inner membrane</keyword>
<keyword id="KW-1003">Cell membrane</keyword>
<keyword id="KW-0406">Ion transport</keyword>
<keyword id="KW-0408">Iron</keyword>
<keyword id="KW-0410">Iron transport</keyword>
<keyword id="KW-0472">Membrane</keyword>
<keyword id="KW-0479">Metal-binding</keyword>
<keyword id="KW-1185">Reference proteome</keyword>
<keyword id="KW-0812">Transmembrane</keyword>
<keyword id="KW-1133">Transmembrane helix</keyword>
<keyword id="KW-0813">Transport</keyword>
<keyword id="KW-0862">Zinc</keyword>
<keyword id="KW-0864">Zinc transport</keyword>